<keyword id="KW-0025">Alternative splicing</keyword>
<keyword id="KW-0217">Developmental protein</keyword>
<keyword id="KW-0221">Differentiation</keyword>
<keyword id="KW-0238">DNA-binding</keyword>
<keyword id="KW-0479">Metal-binding</keyword>
<keyword id="KW-0524">Neurogenesis</keyword>
<keyword id="KW-0539">Nucleus</keyword>
<keyword id="KW-1185">Reference proteome</keyword>
<keyword id="KW-0677">Repeat</keyword>
<keyword id="KW-0804">Transcription</keyword>
<keyword id="KW-0805">Transcription regulation</keyword>
<keyword id="KW-0862">Zinc</keyword>
<keyword id="KW-0863">Zinc-finger</keyword>
<sequence>MDDDQQFCLRWNNHQSTLISVFDTLLENETLVDCTLAAEGKFLKAHKVVLSACSPYFATLLQEQYDKHPIFILKDVKYQELRAMMDYMYRGEVNISQDQLAALLKAAESLQIKGLSDNRTGGGVAPKPESSGHHRGGKLSGAYTLEQTKRARLATGGAMDTSGDVSGSREGSSSPSRRRRKVRRRSMENDAHDNSNSSVLQAAASNQSILQQTGAGLAVSALVTTQLSSGPAAGTSSQASSTQQQQPLTSTNVTKKTESAKLTSSTAAPASGASASAAVQQAHLHQQQAQTTSDAINTENVQAQSQGGAQGVQGDDEDIDEGSAVGGPNSATGPNPASASASAVHAGVVVKQLASVVDKSSSNHKHKIKDNSVSSVGSEMVIEPKAEYDDDAHDENVEDLTLDEEDMTMEELDQTAGTSQGGEGSSQTYATWQHDRSQDELGLMAQDAQQRDPQASKQDKGEQTEGAQDEFELDDCLLESNDIVITQNKDGFVLHVKKLGNITAAKLEENQAVAQQQGQAAVTVTGPAGQPTPTITELLNAAAASHSEPKPTLTTLTSTPIKLPSSECELINIKKIIPATTTIATHHPHTSSTIIHPHHIIQHVSQEPHHQEHHQQHQTIHIEEVPQTSQQHHQQQHHHQLQTVQPTHTQVQSIITAHPGQTINLVGLRNVQLADSKPIASRIRYSRGKIIGPTVQNLQIVETHEPIQHQHHELSDGTKYEISEIDLNNPNASAAIISDLVKYAEIDDIELPDGTKIGIGFAPSEITEHMQTSGGETHITTIEHEPQELQTVHQHEQTQQTHHIHAGQLQTHHIQTVVQSSSGQQQHDQQQHHQHHSIELQDDDGVETITPEELGMHDSSKSYTILTTRPMKEESEHDPSGMTYELSLSDSSLGPCDDPESRYVCRHCGKKYRWKSTLRRHENVECGGKEPCHPCPYCSYKAKQRGNLGVHVRKHHPEKPQLESKRGRKV</sequence>
<comment type="function">
    <text evidence="5 9">Putative transcription factor required for axon growth and guidance in the central and peripheral nervous systems. Repels CNS axons away from the midline by promoting the expression of the midline repellent sli and its receptor robo.</text>
</comment>
<comment type="subcellular location">
    <subcellularLocation>
        <location evidence="9">Nucleus</location>
    </subcellularLocation>
</comment>
<comment type="alternative products">
    <event type="alternative splicing"/>
    <isoform>
        <id>Q867Z4-1</id>
        <name evidence="7">I</name>
        <name evidence="11">Ohsako-K</name>
        <sequence type="displayed"/>
    </isoform>
    <isoform>
        <id>Q867Z4-2</id>
        <name evidence="7">F</name>
        <name evidence="11">Ohsako-I</name>
        <sequence type="described" ref="VSP_051803 VSP_051805"/>
    </isoform>
    <isoform>
        <id>Q867Z4-3</id>
        <name evidence="7">K</name>
        <name evidence="11">Ohsako-H</name>
        <sequence type="described" ref="VSP_051801 VSP_051804"/>
    </isoform>
    <isoform>
        <id>Q867Z4-5</id>
        <name evidence="7">T</name>
        <name evidence="10">U</name>
        <name evidence="11">Ohsako-J</name>
        <sequence type="described" ref="VSP_051802 VSP_051806"/>
    </isoform>
    <isoform>
        <id>Q7KQZ4-2</id>
        <name evidence="7">A</name>
        <name evidence="11">Ohsako-D</name>
        <sequence type="external"/>
    </isoform>
    <isoform>
        <id>Q7KQZ4-1</id>
        <name>B</name>
        <name evidence="7">C</name>
        <name evidence="11">Ohsako-L</name>
        <sequence type="external"/>
    </isoform>
    <isoform>
        <id>Q7KQZ4-3</id>
        <name evidence="10">D</name>
        <name>E</name>
        <name evidence="11">Ohsako-F</name>
        <sequence type="external"/>
    </isoform>
    <isoform>
        <id>P42283-1</id>
        <name evidence="7">G</name>
        <name evidence="12">Long</name>
        <name evidence="11">Ohsako-T</name>
        <name>R</name>
        <sequence type="external"/>
    </isoform>
    <isoform>
        <id>P42284-3</id>
        <name evidence="7">H</name>
        <name evidence="11">Ohsako-M</name>
        <sequence type="external"/>
    </isoform>
    <isoform>
        <id>Q9V5M6-2</id>
        <name evidence="7">J</name>
        <name evidence="11">Ohsako-O</name>
        <sequence type="external"/>
    </isoform>
    <isoform>
        <id>Q7KQZ4-4</id>
        <name evidence="7">L</name>
        <name evidence="11">Ohsako-C</name>
        <sequence type="external"/>
    </isoform>
    <isoform>
        <id>P42284-1</id>
        <name evidence="7">M</name>
        <name evidence="12">Short</name>
        <name evidence="11">Ohsako-A</name>
        <sequence type="external"/>
    </isoform>
    <isoform>
        <id>Q9V5M3-1</id>
        <name evidence="10">N</name>
        <sequence type="external"/>
    </isoform>
    <isoform>
        <id>Q9V5M3-2</id>
        <name evidence="7">O</name>
        <name evidence="11">Ohsako-P</name>
        <sequence type="external"/>
    </isoform>
    <isoform>
        <id>Q9V5M6-1</id>
        <name evidence="7">P</name>
        <name evidence="11">Ohsako-N</name>
        <sequence type="external"/>
    </isoform>
    <isoform>
        <id>Q9V5M6-3</id>
        <name evidence="7">Q</name>
        <name evidence="11">Ohsako-B</name>
        <sequence type="external"/>
    </isoform>
    <isoform>
        <id>Q9V5M6-4</id>
        <name evidence="7">S</name>
        <sequence type="external"/>
    </isoform>
    <isoform>
        <id>P42284-2</id>
        <name evidence="7">V</name>
        <name evidence="11">Ohsako-G</name>
        <sequence type="external"/>
    </isoform>
    <isoform>
        <id>Q9V5M3-3</id>
        <name evidence="7">W</name>
        <name evidence="11">Ohsako-Q</name>
        <sequence type="external"/>
    </isoform>
    <isoform>
        <id>Q9V5M3-4</id>
        <name evidence="7">X</name>
        <name evidence="11">Ohsako-S</name>
        <sequence type="external"/>
    </isoform>
    <isoform>
        <id>Q9V5M3-5</id>
        <name evidence="7">Y</name>
        <name evidence="11">Ohsako-R</name>
        <sequence type="external"/>
    </isoform>
    <isoform>
        <id>Q9V5M6-5</id>
        <name>Z</name>
        <name>Ohsako-E</name>
        <sequence type="external"/>
    </isoform>
    <text>Some isoforms may be generated by alternative trans-splicing of exons sequentially encoded by the same DNA strand.</text>
</comment>
<comment type="tissue specificity">
    <text evidence="8">By stage 11, isoform F is expressed throughout the mesoderm whereas isoform T, and at low levels isoform I, is expressed throughout the ectoderm. Isoform K is expressed in both mesoderm and ectoderm. Expression becomes restricted during later stages; starting from stage 14 to 15, isoform F is expressed in the gut. Isoform I is expressed in the CNS. Isoform I and isoform F show expression in the epithelium starting at stage 14, though for isoform I the CNS expression remains predominant. Expression is also seen in specific types of cells in the embryo; isoform K is expressed in the ventral furrow at stage 5 and in a dynamic pattern in the ventral neurogenic region starting at stage 7. Isoform T is expressed around the tracheal pits at stage 11. Isoform F shows transient enrichment in a dorsal cell layer in the CNS at stages 13 and 14.</text>
</comment>
<comment type="developmental stage">
    <text evidence="6 8 9">Expressed both maternally and zygotically. At least one isoform is present at each developmental stage.</text>
</comment>
<comment type="sequence caution" evidence="13">
    <conflict type="erroneous initiation">
        <sequence resource="EMBL-CDS" id="AAM27509"/>
    </conflict>
    <text>Truncated N-terminus.</text>
</comment>
<accession>Q867Z4</accession>
<accession>A4UZC3</accession>
<accession>Q867F7</accession>
<accession>Q867K2</accession>
<accession>Q867T0</accession>
<accession>Q86BC3</accession>
<accession>Q8MKX6</accession>
<accession>Q8MZH5</accession>
<name>LOLA4_DROME</name>
<organism>
    <name type="scientific">Drosophila melanogaster</name>
    <name type="common">Fruit fly</name>
    <dbReference type="NCBI Taxonomy" id="7227"/>
    <lineage>
        <taxon>Eukaryota</taxon>
        <taxon>Metazoa</taxon>
        <taxon>Ecdysozoa</taxon>
        <taxon>Arthropoda</taxon>
        <taxon>Hexapoda</taxon>
        <taxon>Insecta</taxon>
        <taxon>Pterygota</taxon>
        <taxon>Neoptera</taxon>
        <taxon>Endopterygota</taxon>
        <taxon>Diptera</taxon>
        <taxon>Brachycera</taxon>
        <taxon>Muscomorpha</taxon>
        <taxon>Ephydroidea</taxon>
        <taxon>Drosophilidae</taxon>
        <taxon>Drosophila</taxon>
        <taxon>Sophophora</taxon>
    </lineage>
</organism>
<protein>
    <recommendedName>
        <fullName>Longitudinals lacking protein, isoforms F/I/K/T</fullName>
    </recommendedName>
</protein>
<dbReference type="EMBL" id="AB107279">
    <property type="protein sequence ID" value="BAC67584.1"/>
    <property type="molecule type" value="mRNA"/>
</dbReference>
<dbReference type="EMBL" id="AB107280">
    <property type="protein sequence ID" value="BAC67585.1"/>
    <property type="molecule type" value="mRNA"/>
</dbReference>
<dbReference type="EMBL" id="AB107281">
    <property type="protein sequence ID" value="BAC67586.1"/>
    <property type="molecule type" value="mRNA"/>
</dbReference>
<dbReference type="EMBL" id="AB107282">
    <property type="protein sequence ID" value="BAC67587.1"/>
    <property type="molecule type" value="mRNA"/>
</dbReference>
<dbReference type="EMBL" id="AB107299">
    <property type="protein sequence ID" value="BAC67604.1"/>
    <property type="molecule type" value="mRNA"/>
</dbReference>
<dbReference type="EMBL" id="AB107300">
    <property type="protein sequence ID" value="BAC67605.1"/>
    <property type="molecule type" value="mRNA"/>
</dbReference>
<dbReference type="EMBL" id="AB107301">
    <property type="protein sequence ID" value="BAC67606.1"/>
    <property type="molecule type" value="mRNA"/>
</dbReference>
<dbReference type="EMBL" id="AB107302">
    <property type="protein sequence ID" value="BAC67607.1"/>
    <property type="molecule type" value="mRNA"/>
</dbReference>
<dbReference type="EMBL" id="AB107319">
    <property type="protein sequence ID" value="BAC67624.1"/>
    <property type="molecule type" value="mRNA"/>
</dbReference>
<dbReference type="EMBL" id="AB107320">
    <property type="protein sequence ID" value="BAC67625.1"/>
    <property type="molecule type" value="mRNA"/>
</dbReference>
<dbReference type="EMBL" id="AB107321">
    <property type="protein sequence ID" value="BAC67626.1"/>
    <property type="molecule type" value="mRNA"/>
</dbReference>
<dbReference type="EMBL" id="AB107322">
    <property type="protein sequence ID" value="BAC67627.1"/>
    <property type="molecule type" value="mRNA"/>
</dbReference>
<dbReference type="EMBL" id="AB107339">
    <property type="protein sequence ID" value="BAC67644.1"/>
    <property type="molecule type" value="mRNA"/>
</dbReference>
<dbReference type="EMBL" id="AB107340">
    <property type="protein sequence ID" value="BAC67645.1"/>
    <property type="molecule type" value="mRNA"/>
</dbReference>
<dbReference type="EMBL" id="AB107341">
    <property type="protein sequence ID" value="BAC67646.1"/>
    <property type="molecule type" value="mRNA"/>
</dbReference>
<dbReference type="EMBL" id="AB107342">
    <property type="protein sequence ID" value="BAC67647.1"/>
    <property type="molecule type" value="mRNA"/>
</dbReference>
<dbReference type="EMBL" id="AE013599">
    <property type="protein sequence ID" value="AAM68764.3"/>
    <property type="molecule type" value="Genomic_DNA"/>
</dbReference>
<dbReference type="EMBL" id="AE013599">
    <property type="protein sequence ID" value="AAM68767.2"/>
    <property type="molecule type" value="Genomic_DNA"/>
</dbReference>
<dbReference type="EMBL" id="AE013599">
    <property type="protein sequence ID" value="AAO41426.1"/>
    <property type="molecule type" value="Genomic_DNA"/>
</dbReference>
<dbReference type="EMBL" id="AE013599">
    <property type="protein sequence ID" value="AAO41427.1"/>
    <property type="molecule type" value="Genomic_DNA"/>
</dbReference>
<dbReference type="EMBL" id="AE013599">
    <property type="protein sequence ID" value="AAO41428.1"/>
    <property type="molecule type" value="Genomic_DNA"/>
</dbReference>
<dbReference type="EMBL" id="AY102680">
    <property type="protein sequence ID" value="AAM27509.1"/>
    <property type="status" value="ALT_INIT"/>
    <property type="molecule type" value="mRNA"/>
</dbReference>
<dbReference type="RefSeq" id="NP_724952.2">
    <molecule id="Q867Z4-2"/>
    <property type="nucleotide sequence ID" value="NM_170622.6"/>
</dbReference>
<dbReference type="RefSeq" id="NP_788308.3">
    <molecule id="Q867Z4-1"/>
    <property type="nucleotide sequence ID" value="NM_176128.5"/>
</dbReference>
<dbReference type="RefSeq" id="NP_788313.1">
    <molecule id="Q867Z4-1"/>
    <property type="nucleotide sequence ID" value="NM_176133.5"/>
</dbReference>
<dbReference type="RefSeq" id="NP_788314.1">
    <molecule id="Q867Z4-5"/>
    <property type="nucleotide sequence ID" value="NM_176134.4"/>
</dbReference>
<dbReference type="RefSeq" id="NP_788315.1">
    <molecule id="Q867Z4-5"/>
    <property type="nucleotide sequence ID" value="NM_176135.4"/>
</dbReference>
<dbReference type="RefSeq" id="NP_788316.2">
    <molecule id="Q867Z4-3"/>
    <property type="nucleotide sequence ID" value="NM_176136.5"/>
</dbReference>
<dbReference type="SMR" id="Q867Z4"/>
<dbReference type="BioGRID" id="69126">
    <property type="interactions" value="58"/>
</dbReference>
<dbReference type="FunCoup" id="Q867Z4">
    <property type="interactions" value="359"/>
</dbReference>
<dbReference type="IntAct" id="Q867Z4">
    <property type="interactions" value="11"/>
</dbReference>
<dbReference type="STRING" id="7227.FBpp0309831"/>
<dbReference type="GlyGen" id="Q867Z4">
    <property type="glycosylation" value="2 sites, 1 O-linked glycan (1 site)"/>
</dbReference>
<dbReference type="PaxDb" id="7227-FBpp0088384"/>
<dbReference type="DNASU" id="44548"/>
<dbReference type="EnsemblMetazoa" id="FBtr0089348">
    <molecule id="Q867Z4-2"/>
    <property type="protein sequence ID" value="FBpp0088382"/>
    <property type="gene ID" value="FBgn0283521"/>
</dbReference>
<dbReference type="EnsemblMetazoa" id="FBtr0089350">
    <molecule id="Q867Z4-1"/>
    <property type="protein sequence ID" value="FBpp0088384"/>
    <property type="gene ID" value="FBgn0283521"/>
</dbReference>
<dbReference type="EnsemblMetazoa" id="FBtr0089351">
    <molecule id="Q867Z4-5"/>
    <property type="protein sequence ID" value="FBpp0088385"/>
    <property type="gene ID" value="FBgn0283521"/>
</dbReference>
<dbReference type="EnsemblMetazoa" id="FBtr0089353">
    <molecule id="Q867Z4-3"/>
    <property type="protein sequence ID" value="FBpp0088387"/>
    <property type="gene ID" value="FBgn0283521"/>
</dbReference>
<dbReference type="EnsemblMetazoa" id="FBtr0089359">
    <molecule id="Q867Z4-5"/>
    <property type="protein sequence ID" value="FBpp0088393"/>
    <property type="gene ID" value="FBgn0283521"/>
</dbReference>
<dbReference type="EnsemblMetazoa" id="FBtr0343132">
    <molecule id="Q867Z4-1"/>
    <property type="protein sequence ID" value="FBpp0309831"/>
    <property type="gene ID" value="FBgn0283521"/>
</dbReference>
<dbReference type="GeneID" id="44548"/>
<dbReference type="UCSC" id="CG12052-RU">
    <property type="organism name" value="d. melanogaster"/>
</dbReference>
<dbReference type="AGR" id="FB:FBgn0283521"/>
<dbReference type="CTD" id="44548"/>
<dbReference type="FlyBase" id="FBgn0283521">
    <property type="gene designation" value="lola"/>
</dbReference>
<dbReference type="VEuPathDB" id="VectorBase:FBgn0283521"/>
<dbReference type="eggNOG" id="ENOG502RYRA">
    <property type="taxonomic scope" value="Eukaryota"/>
</dbReference>
<dbReference type="GeneTree" id="ENSGT00940000174551"/>
<dbReference type="HOGENOM" id="CLU_010740_1_0_1"/>
<dbReference type="InParanoid" id="Q867Z4"/>
<dbReference type="OrthoDB" id="407106at2759"/>
<dbReference type="PhylomeDB" id="Q867Z4"/>
<dbReference type="SignaLink" id="Q867Z4"/>
<dbReference type="BioGRID-ORCS" id="44548">
    <property type="hits" value="1 hit in 1 CRISPR screen"/>
</dbReference>
<dbReference type="ChiTaRS" id="lola">
    <property type="organism name" value="fly"/>
</dbReference>
<dbReference type="GenomeRNAi" id="44548"/>
<dbReference type="Proteomes" id="UP000000803">
    <property type="component" value="Chromosome 2R"/>
</dbReference>
<dbReference type="Bgee" id="FBgn0283521">
    <property type="expression patterns" value="Expressed in adult differentiating enterocyte in digestive tract and 312 other cell types or tissues"/>
</dbReference>
<dbReference type="ExpressionAtlas" id="Q867Z4">
    <property type="expression patterns" value="baseline and differential"/>
</dbReference>
<dbReference type="GO" id="GO:0005737">
    <property type="term" value="C:cytoplasm"/>
    <property type="evidence" value="ECO:0000314"/>
    <property type="project" value="FlyBase"/>
</dbReference>
<dbReference type="GO" id="GO:0005654">
    <property type="term" value="C:nucleoplasm"/>
    <property type="evidence" value="ECO:0007005"/>
    <property type="project" value="FlyBase"/>
</dbReference>
<dbReference type="GO" id="GO:0005634">
    <property type="term" value="C:nucleus"/>
    <property type="evidence" value="ECO:0000314"/>
    <property type="project" value="UniProtKB"/>
</dbReference>
<dbReference type="GO" id="GO:0003677">
    <property type="term" value="F:DNA binding"/>
    <property type="evidence" value="ECO:0000314"/>
    <property type="project" value="FlyBase"/>
</dbReference>
<dbReference type="GO" id="GO:0003700">
    <property type="term" value="F:DNA-binding transcription factor activity"/>
    <property type="evidence" value="ECO:0000250"/>
    <property type="project" value="FlyBase"/>
</dbReference>
<dbReference type="GO" id="GO:0008270">
    <property type="term" value="F:zinc ion binding"/>
    <property type="evidence" value="ECO:0007669"/>
    <property type="project" value="UniProtKB-KW"/>
</dbReference>
<dbReference type="GO" id="GO:0007411">
    <property type="term" value="P:axon guidance"/>
    <property type="evidence" value="ECO:0000315"/>
    <property type="project" value="UniProtKB"/>
</dbReference>
<dbReference type="GO" id="GO:0016199">
    <property type="term" value="P:axon midline choice point recognition"/>
    <property type="evidence" value="ECO:0000315"/>
    <property type="project" value="UniProtKB"/>
</dbReference>
<dbReference type="GO" id="GO:0007409">
    <property type="term" value="P:axonogenesis"/>
    <property type="evidence" value="ECO:0000315"/>
    <property type="project" value="UniProtKB"/>
</dbReference>
<dbReference type="GO" id="GO:0048813">
    <property type="term" value="P:dendrite morphogenesis"/>
    <property type="evidence" value="ECO:0000315"/>
    <property type="project" value="FlyBase"/>
</dbReference>
<dbReference type="GO" id="GO:0008406">
    <property type="term" value="P:gonad development"/>
    <property type="evidence" value="ECO:0000315"/>
    <property type="project" value="FlyBase"/>
</dbReference>
<dbReference type="GO" id="GO:0035167">
    <property type="term" value="P:larval lymph gland hemopoiesis"/>
    <property type="evidence" value="ECO:0000315"/>
    <property type="project" value="FlyBase"/>
</dbReference>
<dbReference type="GO" id="GO:0007526">
    <property type="term" value="P:larval somatic muscle development"/>
    <property type="evidence" value="ECO:0000315"/>
    <property type="project" value="FlyBase"/>
</dbReference>
<dbReference type="GO" id="GO:0045476">
    <property type="term" value="P:nurse cell apoptotic process"/>
    <property type="evidence" value="ECO:0000315"/>
    <property type="project" value="FlyBase"/>
</dbReference>
<dbReference type="GO" id="GO:0006964">
    <property type="term" value="P:positive regulation of biosynthetic process of antibacterial peptides active against Gram-negative bacteria"/>
    <property type="evidence" value="ECO:0007001"/>
    <property type="project" value="FlyBase"/>
</dbReference>
<dbReference type="GO" id="GO:0045893">
    <property type="term" value="P:positive regulation of DNA-templated transcription"/>
    <property type="evidence" value="ECO:0000250"/>
    <property type="project" value="UniProtKB"/>
</dbReference>
<dbReference type="GO" id="GO:0061059">
    <property type="term" value="P:positive regulation of peptidoglycan recognition protein signaling pathway"/>
    <property type="evidence" value="ECO:0007001"/>
    <property type="project" value="FlyBase"/>
</dbReference>
<dbReference type="GO" id="GO:0007464">
    <property type="term" value="P:R3/R4 cell fate commitment"/>
    <property type="evidence" value="ECO:0000315"/>
    <property type="project" value="FlyBase"/>
</dbReference>
<dbReference type="GO" id="GO:0045467">
    <property type="term" value="P:R7 cell development"/>
    <property type="evidence" value="ECO:0000315"/>
    <property type="project" value="FlyBase"/>
</dbReference>
<dbReference type="GO" id="GO:1902667">
    <property type="term" value="P:regulation of axon guidance"/>
    <property type="evidence" value="ECO:0000315"/>
    <property type="project" value="FlyBase"/>
</dbReference>
<dbReference type="GO" id="GO:0006355">
    <property type="term" value="P:regulation of DNA-templated transcription"/>
    <property type="evidence" value="ECO:0000315"/>
    <property type="project" value="FlyBase"/>
</dbReference>
<dbReference type="GO" id="GO:0010468">
    <property type="term" value="P:regulation of gene expression"/>
    <property type="evidence" value="ECO:0000315"/>
    <property type="project" value="FlyBase"/>
</dbReference>
<dbReference type="GO" id="GO:0006357">
    <property type="term" value="P:regulation of transcription by RNA polymerase II"/>
    <property type="evidence" value="ECO:0000318"/>
    <property type="project" value="GO_Central"/>
</dbReference>
<dbReference type="CDD" id="cd18315">
    <property type="entry name" value="BTB_POZ_BAB-like"/>
    <property type="match status" value="1"/>
</dbReference>
<dbReference type="FunFam" id="3.30.710.10:FF:000091">
    <property type="entry name" value="Lola, isoform F"/>
    <property type="match status" value="1"/>
</dbReference>
<dbReference type="Gene3D" id="3.30.160.60">
    <property type="entry name" value="Classic Zinc Finger"/>
    <property type="match status" value="1"/>
</dbReference>
<dbReference type="Gene3D" id="3.30.710.10">
    <property type="entry name" value="Potassium Channel Kv1.1, Chain A"/>
    <property type="match status" value="1"/>
</dbReference>
<dbReference type="InterPro" id="IPR000210">
    <property type="entry name" value="BTB/POZ_dom"/>
</dbReference>
<dbReference type="InterPro" id="IPR051095">
    <property type="entry name" value="Dros_DevTransReg"/>
</dbReference>
<dbReference type="InterPro" id="IPR011333">
    <property type="entry name" value="SKP1/BTB/POZ_sf"/>
</dbReference>
<dbReference type="InterPro" id="IPR036236">
    <property type="entry name" value="Znf_C2H2_sf"/>
</dbReference>
<dbReference type="InterPro" id="IPR013087">
    <property type="entry name" value="Znf_C2H2_type"/>
</dbReference>
<dbReference type="PANTHER" id="PTHR23110">
    <property type="entry name" value="BTB DOMAIN TRANSCRIPTION FACTOR"/>
    <property type="match status" value="1"/>
</dbReference>
<dbReference type="PANTHER" id="PTHR23110:SF111">
    <property type="entry name" value="LONGITUDINALS LACKING PROTEIN, ISOFORMS F_I_K_T"/>
    <property type="match status" value="1"/>
</dbReference>
<dbReference type="Pfam" id="PF00651">
    <property type="entry name" value="BTB"/>
    <property type="match status" value="1"/>
</dbReference>
<dbReference type="SMART" id="SM00225">
    <property type="entry name" value="BTB"/>
    <property type="match status" value="1"/>
</dbReference>
<dbReference type="SMART" id="SM00355">
    <property type="entry name" value="ZnF_C2H2"/>
    <property type="match status" value="2"/>
</dbReference>
<dbReference type="SUPFAM" id="SSF57667">
    <property type="entry name" value="beta-beta-alpha zinc fingers"/>
    <property type="match status" value="1"/>
</dbReference>
<dbReference type="SUPFAM" id="SSF54695">
    <property type="entry name" value="POZ domain"/>
    <property type="match status" value="1"/>
</dbReference>
<dbReference type="PROSITE" id="PS50097">
    <property type="entry name" value="BTB"/>
    <property type="match status" value="1"/>
</dbReference>
<dbReference type="PROSITE" id="PS50157">
    <property type="entry name" value="ZINC_FINGER_C2H2_2"/>
    <property type="match status" value="2"/>
</dbReference>
<feature type="chain" id="PRO_0000047075" description="Longitudinals lacking protein, isoforms F/I/K/T">
    <location>
        <begin position="1"/>
        <end position="970"/>
    </location>
</feature>
<feature type="domain" description="BTB" evidence="1">
    <location>
        <begin position="32"/>
        <end position="97"/>
    </location>
</feature>
<feature type="zinc finger region" description="C2H2-type 1; degenerate" evidence="2">
    <location>
        <begin position="903"/>
        <end position="925"/>
    </location>
</feature>
<feature type="zinc finger region" description="C2H2-type 2" evidence="2">
    <location>
        <begin position="933"/>
        <end position="955"/>
    </location>
</feature>
<feature type="region of interest" description="Disordered" evidence="3">
    <location>
        <begin position="115"/>
        <end position="200"/>
    </location>
</feature>
<feature type="region of interest" description="Disordered" evidence="3">
    <location>
        <begin position="228"/>
        <end position="340"/>
    </location>
</feature>
<feature type="region of interest" description="Disordered" evidence="3">
    <location>
        <begin position="447"/>
        <end position="468"/>
    </location>
</feature>
<feature type="region of interest" description="Disordered" evidence="3">
    <location>
        <begin position="790"/>
        <end position="843"/>
    </location>
</feature>
<feature type="compositionally biased region" description="Low complexity" evidence="3">
    <location>
        <begin position="162"/>
        <end position="175"/>
    </location>
</feature>
<feature type="compositionally biased region" description="Low complexity" evidence="3">
    <location>
        <begin position="228"/>
        <end position="251"/>
    </location>
</feature>
<feature type="compositionally biased region" description="Low complexity" evidence="3">
    <location>
        <begin position="263"/>
        <end position="293"/>
    </location>
</feature>
<feature type="compositionally biased region" description="Low complexity" evidence="3">
    <location>
        <begin position="329"/>
        <end position="340"/>
    </location>
</feature>
<feature type="compositionally biased region" description="Polar residues" evidence="3">
    <location>
        <begin position="447"/>
        <end position="456"/>
    </location>
</feature>
<feature type="compositionally biased region" description="Polar residues" evidence="3">
    <location>
        <begin position="808"/>
        <end position="818"/>
    </location>
</feature>
<feature type="compositionally biased region" description="Low complexity" evidence="3">
    <location>
        <begin position="819"/>
        <end position="828"/>
    </location>
</feature>
<feature type="splice variant" id="VSP_051802" description="In isoform T." evidence="11">
    <original>ASKQDKGEQTEGAQDEFELDDCLLESNDIVITQNKDGFVLHVKKLGNITAAKLEENQAVAQQQGQAAVTVTGPAGQPTPTITELLNAAAASHSEPKPTLTTLTSTPIKLPSSECELINIKK</original>
    <variation>ENSWTISVKSVTSLNNVSPSNNSHICPRCEKAYTYKKNLSRHLRYECGQLPTEKCRHCSYVARYKHSLNMHVKTQHPEQISDTFAGSSGSSDGVRDRRGRSLVRGLFDSAKGEKFLDYLNN</variation>
    <location>
        <begin position="455"/>
        <end position="575"/>
    </location>
</feature>
<feature type="splice variant" id="VSP_051801" description="In isoform K." evidence="11">
    <original>ASKQDKGEQTEGAQDEFELDDCLLESNDIVITQNKDGFVLHVKKLGNITAAKLEENQAVAQQQGQAAVTVTGPAGQPTPTITELLNAAAASH</original>
    <variation>DFVLTWYQHACDQCGKSYKTRKSLSRHRRFECRFTTERPIFQCPSCNYAAKRSDNLTKHIKTHFAKMKKDFLPLAFQMQASTGIATKWEATA</variation>
    <location>
        <begin position="455"/>
        <end position="546"/>
    </location>
</feature>
<feature type="splice variant" id="VSP_051803" description="In isoform F." evidence="11">
    <original>SKQDKGEQTEGAQDEFELDDCLLESNDIVITQNKDGFVLHVKKLGNITAAKLEENQAVAQQQGQAAVTVTGPAGQPTPTITELLNAAAASHSEPKPTLTTLTSTPIKLPS</original>
    <variation>PSSYVSNSSQTPPPIGGSSSASSAQALIRDYWYELKFSDLFKFINPDGRYQCPRFNCLKSYKDASSLQRHIRYECGGQKKFRCLMCGKAFSQSSHLKRHLESGVCVKYYL</variation>
    <location>
        <begin position="456"/>
        <end position="565"/>
    </location>
</feature>
<feature type="splice variant" id="VSP_051804" description="In isoform K." evidence="11">
    <location>
        <begin position="547"/>
        <end position="970"/>
    </location>
</feature>
<feature type="splice variant" id="VSP_051805" description="In isoform F." evidence="11">
    <location>
        <begin position="566"/>
        <end position="970"/>
    </location>
</feature>
<feature type="splice variant" id="VSP_051806" description="In isoform T." evidence="11">
    <location>
        <begin position="576"/>
        <end position="970"/>
    </location>
</feature>
<feature type="mutagenesis site" description="In ORE120; defective in embryonic axon guidance." evidence="5">
    <original>A</original>
    <variation>V</variation>
    <location>
        <position position="107"/>
    </location>
</feature>
<reference evidence="13 16" key="1">
    <citation type="journal article" date="2003" name="Gene">
        <title>Drosophila lola encodes a family of BTB-transcription regulators with highly variable C-terminal domains containing zinc finger motifs.</title>
        <authorList>
            <person name="Ohsako T."/>
            <person name="Horiuchi T."/>
            <person name="Matsuo T."/>
            <person name="Komaya S."/>
            <person name="Aigaki T."/>
        </authorList>
    </citation>
    <scope>NUCLEOTIDE SEQUENCE [MRNA] (ISOFORMS F; I; K AND T)</scope>
    <source>
        <strain evidence="15">Canton-S</strain>
        <tissue evidence="7">Larva</tissue>
        <tissue evidence="7">Pupae</tissue>
    </source>
</reference>
<reference evidence="14" key="2">
    <citation type="journal article" date="2000" name="Science">
        <title>The genome sequence of Drosophila melanogaster.</title>
        <authorList>
            <person name="Adams M.D."/>
            <person name="Celniker S.E."/>
            <person name="Holt R.A."/>
            <person name="Evans C.A."/>
            <person name="Gocayne J.D."/>
            <person name="Amanatides P.G."/>
            <person name="Scherer S.E."/>
            <person name="Li P.W."/>
            <person name="Hoskins R.A."/>
            <person name="Galle R.F."/>
            <person name="George R.A."/>
            <person name="Lewis S.E."/>
            <person name="Richards S."/>
            <person name="Ashburner M."/>
            <person name="Henderson S.N."/>
            <person name="Sutton G.G."/>
            <person name="Wortman J.R."/>
            <person name="Yandell M.D."/>
            <person name="Zhang Q."/>
            <person name="Chen L.X."/>
            <person name="Brandon R.C."/>
            <person name="Rogers Y.-H.C."/>
            <person name="Blazej R.G."/>
            <person name="Champe M."/>
            <person name="Pfeiffer B.D."/>
            <person name="Wan K.H."/>
            <person name="Doyle C."/>
            <person name="Baxter E.G."/>
            <person name="Helt G."/>
            <person name="Nelson C.R."/>
            <person name="Miklos G.L.G."/>
            <person name="Abril J.F."/>
            <person name="Agbayani A."/>
            <person name="An H.-J."/>
            <person name="Andrews-Pfannkoch C."/>
            <person name="Baldwin D."/>
            <person name="Ballew R.M."/>
            <person name="Basu A."/>
            <person name="Baxendale J."/>
            <person name="Bayraktaroglu L."/>
            <person name="Beasley E.M."/>
            <person name="Beeson K.Y."/>
            <person name="Benos P.V."/>
            <person name="Berman B.P."/>
            <person name="Bhandari D."/>
            <person name="Bolshakov S."/>
            <person name="Borkova D."/>
            <person name="Botchan M.R."/>
            <person name="Bouck J."/>
            <person name="Brokstein P."/>
            <person name="Brottier P."/>
            <person name="Burtis K.C."/>
            <person name="Busam D.A."/>
            <person name="Butler H."/>
            <person name="Cadieu E."/>
            <person name="Center A."/>
            <person name="Chandra I."/>
            <person name="Cherry J.M."/>
            <person name="Cawley S."/>
            <person name="Dahlke C."/>
            <person name="Davenport L.B."/>
            <person name="Davies P."/>
            <person name="de Pablos B."/>
            <person name="Delcher A."/>
            <person name="Deng Z."/>
            <person name="Mays A.D."/>
            <person name="Dew I."/>
            <person name="Dietz S.M."/>
            <person name="Dodson K."/>
            <person name="Doup L.E."/>
            <person name="Downes M."/>
            <person name="Dugan-Rocha S."/>
            <person name="Dunkov B.C."/>
            <person name="Dunn P."/>
            <person name="Durbin K.J."/>
            <person name="Evangelista C.C."/>
            <person name="Ferraz C."/>
            <person name="Ferriera S."/>
            <person name="Fleischmann W."/>
            <person name="Fosler C."/>
            <person name="Gabrielian A.E."/>
            <person name="Garg N.S."/>
            <person name="Gelbart W.M."/>
            <person name="Glasser K."/>
            <person name="Glodek A."/>
            <person name="Gong F."/>
            <person name="Gorrell J.H."/>
            <person name="Gu Z."/>
            <person name="Guan P."/>
            <person name="Harris M."/>
            <person name="Harris N.L."/>
            <person name="Harvey D.A."/>
            <person name="Heiman T.J."/>
            <person name="Hernandez J.R."/>
            <person name="Houck J."/>
            <person name="Hostin D."/>
            <person name="Houston K.A."/>
            <person name="Howland T.J."/>
            <person name="Wei M.-H."/>
            <person name="Ibegwam C."/>
            <person name="Jalali M."/>
            <person name="Kalush F."/>
            <person name="Karpen G.H."/>
            <person name="Ke Z."/>
            <person name="Kennison J.A."/>
            <person name="Ketchum K.A."/>
            <person name="Kimmel B.E."/>
            <person name="Kodira C.D."/>
            <person name="Kraft C.L."/>
            <person name="Kravitz S."/>
            <person name="Kulp D."/>
            <person name="Lai Z."/>
            <person name="Lasko P."/>
            <person name="Lei Y."/>
            <person name="Levitsky A.A."/>
            <person name="Li J.H."/>
            <person name="Li Z."/>
            <person name="Liang Y."/>
            <person name="Lin X."/>
            <person name="Liu X."/>
            <person name="Mattei B."/>
            <person name="McIntosh T.C."/>
            <person name="McLeod M.P."/>
            <person name="McPherson D."/>
            <person name="Merkulov G."/>
            <person name="Milshina N.V."/>
            <person name="Mobarry C."/>
            <person name="Morris J."/>
            <person name="Moshrefi A."/>
            <person name="Mount S.M."/>
            <person name="Moy M."/>
            <person name="Murphy B."/>
            <person name="Murphy L."/>
            <person name="Muzny D.M."/>
            <person name="Nelson D.L."/>
            <person name="Nelson D.R."/>
            <person name="Nelson K.A."/>
            <person name="Nixon K."/>
            <person name="Nusskern D.R."/>
            <person name="Pacleb J.M."/>
            <person name="Palazzolo M."/>
            <person name="Pittman G.S."/>
            <person name="Pan S."/>
            <person name="Pollard J."/>
            <person name="Puri V."/>
            <person name="Reese M.G."/>
            <person name="Reinert K."/>
            <person name="Remington K."/>
            <person name="Saunders R.D.C."/>
            <person name="Scheeler F."/>
            <person name="Shen H."/>
            <person name="Shue B.C."/>
            <person name="Siden-Kiamos I."/>
            <person name="Simpson M."/>
            <person name="Skupski M.P."/>
            <person name="Smith T.J."/>
            <person name="Spier E."/>
            <person name="Spradling A.C."/>
            <person name="Stapleton M."/>
            <person name="Strong R."/>
            <person name="Sun E."/>
            <person name="Svirskas R."/>
            <person name="Tector C."/>
            <person name="Turner R."/>
            <person name="Venter E."/>
            <person name="Wang A.H."/>
            <person name="Wang X."/>
            <person name="Wang Z.-Y."/>
            <person name="Wassarman D.A."/>
            <person name="Weinstock G.M."/>
            <person name="Weissenbach J."/>
            <person name="Williams S.M."/>
            <person name="Woodage T."/>
            <person name="Worley K.C."/>
            <person name="Wu D."/>
            <person name="Yang S."/>
            <person name="Yao Q.A."/>
            <person name="Ye J."/>
            <person name="Yeh R.-F."/>
            <person name="Zaveri J.S."/>
            <person name="Zhan M."/>
            <person name="Zhang G."/>
            <person name="Zhao Q."/>
            <person name="Zheng L."/>
            <person name="Zheng X.H."/>
            <person name="Zhong F.N."/>
            <person name="Zhong W."/>
            <person name="Zhou X."/>
            <person name="Zhu S.C."/>
            <person name="Zhu X."/>
            <person name="Smith H.O."/>
            <person name="Gibbs R.A."/>
            <person name="Myers E.W."/>
            <person name="Rubin G.M."/>
            <person name="Venter J.C."/>
        </authorList>
    </citation>
    <scope>NUCLEOTIDE SEQUENCE [LARGE SCALE GENOMIC DNA]</scope>
    <source>
        <strain evidence="4">Berkeley</strain>
    </source>
</reference>
<reference evidence="13 14" key="3">
    <citation type="journal article" date="2002" name="Genome Biol.">
        <title>Annotation of the Drosophila melanogaster euchromatic genome: a systematic review.</title>
        <authorList>
            <person name="Misra S."/>
            <person name="Crosby M.A."/>
            <person name="Mungall C.J."/>
            <person name="Matthews B.B."/>
            <person name="Campbell K.S."/>
            <person name="Hradecky P."/>
            <person name="Huang Y."/>
            <person name="Kaminker J.S."/>
            <person name="Millburn G.H."/>
            <person name="Prochnik S.E."/>
            <person name="Smith C.D."/>
            <person name="Tupy J.L."/>
            <person name="Whitfield E.J."/>
            <person name="Bayraktaroglu L."/>
            <person name="Berman B.P."/>
            <person name="Bettencourt B.R."/>
            <person name="Celniker S.E."/>
            <person name="de Grey A.D.N.J."/>
            <person name="Drysdale R.A."/>
            <person name="Harris N.L."/>
            <person name="Richter J."/>
            <person name="Russo S."/>
            <person name="Schroeder A.J."/>
            <person name="Shu S.Q."/>
            <person name="Stapleton M."/>
            <person name="Yamada C."/>
            <person name="Ashburner M."/>
            <person name="Gelbart W.M."/>
            <person name="Rubin G.M."/>
            <person name="Lewis S.E."/>
        </authorList>
    </citation>
    <scope>GENOME REANNOTATION</scope>
    <scope>ALTERNATIVE SPLICING</scope>
    <source>
        <strain>Berkeley</strain>
    </source>
</reference>
<reference key="4">
    <citation type="journal article" date="2002" name="Genome Biol.">
        <title>A Drosophila full-length cDNA resource.</title>
        <authorList>
            <person name="Stapleton M."/>
            <person name="Carlson J.W."/>
            <person name="Brokstein P."/>
            <person name="Yu C."/>
            <person name="Champe M."/>
            <person name="George R.A."/>
            <person name="Guarin H."/>
            <person name="Kronmiller B."/>
            <person name="Pacleb J.M."/>
            <person name="Park S."/>
            <person name="Wan K.H."/>
            <person name="Rubin G.M."/>
            <person name="Celniker S.E."/>
        </authorList>
    </citation>
    <scope>NUCLEOTIDE SEQUENCE [LARGE SCALE MRNA] OF 688-970 (ISOFORM I)</scope>
    <source>
        <strain>Berkeley</strain>
        <tissue>Embryo</tissue>
    </source>
</reference>
<reference evidence="13" key="5">
    <citation type="journal article" date="1994" name="Development">
        <title>Lola encodes a putative transcription factor required for axon growth and guidance in Drosophila.</title>
        <authorList>
            <person name="Giniger E."/>
            <person name="Tietje K."/>
            <person name="Jan L.Y."/>
            <person name="Jan Y.N."/>
        </authorList>
    </citation>
    <scope>FUNCTION</scope>
    <scope>SUBCELLULAR LOCATION</scope>
    <scope>DEVELOPMENTAL STAGE</scope>
</reference>
<reference evidence="13" key="6">
    <citation type="journal article" date="2002" name="Development">
        <title>Lola regulates midline crossing of CNS axons in Drosophila.</title>
        <authorList>
            <person name="Crowner D."/>
            <person name="Madden K."/>
            <person name="Goeke S."/>
            <person name="Giniger E."/>
        </authorList>
    </citation>
    <scope>FUNCTION</scope>
    <scope>MUTAGENESIS OF ALA-107</scope>
</reference>
<reference key="7">
    <citation type="journal article" date="2003" name="Genes Dev.">
        <title>Alternative trans-splicing of constant and variable exons of a Drosophila axon guidance gene, lola.</title>
        <authorList>
            <person name="Horiuchi T."/>
            <person name="Giniger E."/>
            <person name="Aigaki T."/>
        </authorList>
    </citation>
    <scope>TRANS-SPLICING</scope>
</reference>
<reference evidence="13" key="8">
    <citation type="journal article" date="2003" name="J. Biol. Chem.">
        <title>A developmentally regulated splice variant from the complex lola locus encoding multiple different zinc finger domain proteins interacts with the chromosomal kinase JIL-1.</title>
        <authorList>
            <person name="Zhang W."/>
            <person name="Wang Y."/>
            <person name="Long J."/>
            <person name="Girton J."/>
            <person name="Johansen J."/>
            <person name="Johansen K.M."/>
        </authorList>
    </citation>
    <scope>DEVELOPMENTAL STAGE</scope>
</reference>
<reference key="9">
    <citation type="journal article" date="2003" name="Nat. Neurosci.">
        <title>Alternative splicing of lola generates 19 transcription factors controlling axon guidance in Drosophila.</title>
        <authorList>
            <person name="Goeke S."/>
            <person name="Greene E.A."/>
            <person name="Grant P.K."/>
            <person name="Gates M.A."/>
            <person name="Crowner D."/>
            <person name="Aigaki T."/>
            <person name="Giniger E."/>
        </authorList>
    </citation>
    <scope>DEVELOPMENTAL STAGE</scope>
    <scope>TISSUE SPECIFICITY</scope>
</reference>
<evidence type="ECO:0000255" key="1">
    <source>
        <dbReference type="PROSITE-ProRule" id="PRU00037"/>
    </source>
</evidence>
<evidence type="ECO:0000255" key="2">
    <source>
        <dbReference type="PROSITE-ProRule" id="PRU00042"/>
    </source>
</evidence>
<evidence type="ECO:0000256" key="3">
    <source>
        <dbReference type="SAM" id="MobiDB-lite"/>
    </source>
</evidence>
<evidence type="ECO:0000269" key="4">
    <source>
    </source>
</evidence>
<evidence type="ECO:0000269" key="5">
    <source>
    </source>
</evidence>
<evidence type="ECO:0000269" key="6">
    <source>
    </source>
</evidence>
<evidence type="ECO:0000269" key="7">
    <source>
    </source>
</evidence>
<evidence type="ECO:0000269" key="8">
    <source>
    </source>
</evidence>
<evidence type="ECO:0000269" key="9">
    <source>
    </source>
</evidence>
<evidence type="ECO:0000303" key="10">
    <source>
    </source>
</evidence>
<evidence type="ECO:0000303" key="11">
    <source>
    </source>
</evidence>
<evidence type="ECO:0000303" key="12">
    <source>
    </source>
</evidence>
<evidence type="ECO:0000305" key="13"/>
<evidence type="ECO:0000312" key="14">
    <source>
        <dbReference type="EMBL" id="AAO41426.1"/>
    </source>
</evidence>
<evidence type="ECO:0000312" key="15">
    <source>
        <dbReference type="EMBL" id="BAC67585.1"/>
    </source>
</evidence>
<evidence type="ECO:0000312" key="16">
    <source>
        <dbReference type="EMBL" id="BAC67587.1"/>
    </source>
</evidence>
<evidence type="ECO:0000312" key="17">
    <source>
        <dbReference type="FlyBase" id="FBgn0283521"/>
    </source>
</evidence>
<gene>
    <name evidence="17" type="primary">lola</name>
    <name evidence="17" type="ORF">CG12052</name>
</gene>
<proteinExistence type="evidence at protein level"/>